<dbReference type="EMBL" id="L22858">
    <property type="protein sequence ID" value="AAA66706.1"/>
    <property type="molecule type" value="Genomic_DNA"/>
</dbReference>
<dbReference type="EMBL" id="X71415">
    <property type="protein sequence ID" value="CAA50539.1"/>
    <property type="molecule type" value="Genomic_DNA"/>
</dbReference>
<dbReference type="PIR" id="E72859">
    <property type="entry name" value="E72859"/>
</dbReference>
<dbReference type="PIR" id="S36691">
    <property type="entry name" value="S36691"/>
</dbReference>
<dbReference type="KEGG" id="vg:1403909"/>
<dbReference type="OrthoDB" id="23474at10239"/>
<dbReference type="Proteomes" id="UP000008292">
    <property type="component" value="Segment"/>
</dbReference>
<dbReference type="GO" id="GO:0030430">
    <property type="term" value="C:host cell cytoplasm"/>
    <property type="evidence" value="ECO:0007669"/>
    <property type="project" value="UniProtKB-SubCell"/>
</dbReference>
<dbReference type="GO" id="GO:0044200">
    <property type="term" value="C:host cell nuclear membrane"/>
    <property type="evidence" value="ECO:0000314"/>
    <property type="project" value="UniProtKB"/>
</dbReference>
<dbReference type="InterPro" id="IPR008561">
    <property type="entry name" value="Ac76_baculovir"/>
</dbReference>
<dbReference type="Pfam" id="PF05814">
    <property type="entry name" value="Ac76"/>
    <property type="match status" value="1"/>
</dbReference>
<keyword id="KW-1035">Host cytoplasm</keyword>
<keyword id="KW-1048">Host nucleus</keyword>
<keyword id="KW-1185">Reference proteome</keyword>
<comment type="function">
    <text evidence="1">Plays an essential role in budded virion (BV) and occluded derived virion (ODV) development. Participates in intranuclear microvesicle formation, ODV envelopment, and subsequent embedding of virions into occlusion bodies.</text>
</comment>
<comment type="subunit">
    <text evidence="1">Interacts with protein Ac75.</text>
</comment>
<comment type="subcellular location">
    <subcellularLocation>
        <location evidence="1">Host cytoplasm</location>
    </subcellularLocation>
    <subcellularLocation>
        <location evidence="1">Host nucleus</location>
    </subcellularLocation>
</comment>
<accession>Q06690</accession>
<evidence type="ECO:0000269" key="1">
    <source>
    </source>
</evidence>
<evidence type="ECO:0000305" key="2"/>
<name>AC76_NPVAC</name>
<organismHost>
    <name type="scientific">Lepidoptera</name>
    <name type="common">butterflies and moths</name>
    <dbReference type="NCBI Taxonomy" id="7088"/>
</organismHost>
<gene>
    <name type="primary">Ac76</name>
</gene>
<organism>
    <name type="scientific">Autographa californica nuclear polyhedrosis virus</name>
    <name type="common">AcMNPV</name>
    <dbReference type="NCBI Taxonomy" id="46015"/>
    <lineage>
        <taxon>Viruses</taxon>
        <taxon>Viruses incertae sedis</taxon>
        <taxon>Naldaviricetes</taxon>
        <taxon>Lefavirales</taxon>
        <taxon>Baculoviridae</taxon>
        <taxon>Alphabaculovirus</taxon>
        <taxon>Alphabaculovirus aucalifornicae</taxon>
    </lineage>
</organism>
<proteinExistence type="evidence at protein level"/>
<protein>
    <recommendedName>
        <fullName>Protein Ac76</fullName>
    </recommendedName>
</protein>
<feature type="chain" id="PRO_0000133018" description="Protein Ac76">
    <location>
        <begin position="1"/>
        <end position="84"/>
    </location>
</feature>
<feature type="sequence conflict" description="In Ref. 2; CAA50539." evidence="2" ref="2">
    <original>S</original>
    <variation>N</variation>
    <location>
        <position position="61"/>
    </location>
</feature>
<feature type="sequence conflict" description="In Ref. 2; CAA50539." evidence="2" ref="2">
    <original>A</original>
    <variation>T</variation>
    <location>
        <position position="71"/>
    </location>
</feature>
<feature type="sequence conflict" description="In Ref. 2; CAA50539." evidence="2" ref="2">
    <original>A</original>
    <variation>S</variation>
    <location>
        <position position="74"/>
    </location>
</feature>
<sequence length="84" mass="9440">MNLYLLLGALAIFSLVYDKKENSIFLYLLILFLVFIIVSPAIISKNTESTVEDIPSHKAKSVRKKLEIEQALDAILNKNTSSID</sequence>
<reference key="1">
    <citation type="journal article" date="1994" name="Virology">
        <title>The complete DNA sequence of Autographa californica nuclear polyhedrosis virus.</title>
        <authorList>
            <person name="Ayres M.D."/>
            <person name="Howard S.C."/>
            <person name="Kuzio J."/>
            <person name="Lopez-Ferber M."/>
            <person name="Possee R.D."/>
        </authorList>
    </citation>
    <scope>NUCLEOTIDE SEQUENCE [LARGE SCALE GENOMIC DNA]</scope>
    <source>
        <strain>C6</strain>
    </source>
</reference>
<reference key="2">
    <citation type="journal article" date="1994" name="J. Gen. Virol.">
        <title>Nucleotide sequence and genetic organization of a 7.3 kb region (map unit 47 to 52.5) of Autographa californica nuclear polyhedrosis virus fragment EcoRI-C.</title>
        <authorList>
            <person name="Kool M."/>
            <person name="Broer R."/>
            <person name="Zuidema D."/>
            <person name="Goldbach R.W."/>
            <person name="Vlak J.M."/>
        </authorList>
    </citation>
    <scope>NUCLEOTIDE SEQUENCE [GENOMIC DNA]</scope>
    <source>
        <strain>E2</strain>
    </source>
</reference>
<reference key="3">
    <citation type="journal article" date="2010" name="J. Virol.">
        <title>Autographa californica multiple nucleopolyhedrovirus ac76 is involved in intranuclear microvesicle formation.</title>
        <authorList>
            <person name="Hu Z."/>
            <person name="Yuan M."/>
            <person name="Wu W."/>
            <person name="Liu C."/>
            <person name="Yang K."/>
            <person name="Pang Y."/>
        </authorList>
    </citation>
    <scope>FUNCTION</scope>
    <scope>SUBCELLULAR LOCATION</scope>
</reference>
<reference key="4">
    <citation type="journal article" date="2018" name="J. Virol.">
        <title>Is Required for the Nuclear Egress of Nucleocapsids and Intranuclear Microvesicle Formation.</title>
        <authorList>
            <person name="Shi A."/>
            <person name="Hu Z."/>
            <person name="Zuo Y."/>
            <person name="Wang Y."/>
            <person name="Wu W."/>
            <person name="Yuan M."/>
            <person name="Yang K."/>
        </authorList>
    </citation>
    <scope>INTERACTION WITH PROTEIN AC75</scope>
</reference>